<reference key="1">
    <citation type="submission" date="2006-03" db="EMBL/GenBank/DDBJ databases">
        <title>Complete sequence of chromosome of Psychrobacter cryohalolentis K5.</title>
        <authorList>
            <consortium name="US DOE Joint Genome Institute"/>
            <person name="Copeland A."/>
            <person name="Lucas S."/>
            <person name="Lapidus A."/>
            <person name="Barry K."/>
            <person name="Detter J.C."/>
            <person name="Glavina T."/>
            <person name="Hammon N."/>
            <person name="Israni S."/>
            <person name="Dalin E."/>
            <person name="Tice H."/>
            <person name="Pitluck S."/>
            <person name="Brettin T."/>
            <person name="Bruce D."/>
            <person name="Han C."/>
            <person name="Tapia R."/>
            <person name="Sims D.R."/>
            <person name="Gilna P."/>
            <person name="Schmutz J."/>
            <person name="Larimer F."/>
            <person name="Land M."/>
            <person name="Hauser L."/>
            <person name="Kyrpides N."/>
            <person name="Kim E."/>
            <person name="Richardson P."/>
        </authorList>
    </citation>
    <scope>NUCLEOTIDE SEQUENCE [LARGE SCALE GENOMIC DNA]</scope>
    <source>
        <strain>ATCC BAA-1226 / DSM 17306 / VKM B-2378 / K5</strain>
    </source>
</reference>
<organism>
    <name type="scientific">Psychrobacter cryohalolentis (strain ATCC BAA-1226 / DSM 17306 / VKM B-2378 / K5)</name>
    <dbReference type="NCBI Taxonomy" id="335284"/>
    <lineage>
        <taxon>Bacteria</taxon>
        <taxon>Pseudomonadati</taxon>
        <taxon>Pseudomonadota</taxon>
        <taxon>Gammaproteobacteria</taxon>
        <taxon>Moraxellales</taxon>
        <taxon>Moraxellaceae</taxon>
        <taxon>Psychrobacter</taxon>
    </lineage>
</organism>
<name>ATPF_PSYCK</name>
<proteinExistence type="inferred from homology"/>
<keyword id="KW-0066">ATP synthesis</keyword>
<keyword id="KW-0997">Cell inner membrane</keyword>
<keyword id="KW-1003">Cell membrane</keyword>
<keyword id="KW-0138">CF(0)</keyword>
<keyword id="KW-0375">Hydrogen ion transport</keyword>
<keyword id="KW-0406">Ion transport</keyword>
<keyword id="KW-0472">Membrane</keyword>
<keyword id="KW-0812">Transmembrane</keyword>
<keyword id="KW-1133">Transmembrane helix</keyword>
<keyword id="KW-0813">Transport</keyword>
<feature type="chain" id="PRO_0000368698" description="ATP synthase subunit b">
    <location>
        <begin position="1"/>
        <end position="156"/>
    </location>
</feature>
<feature type="transmembrane region" description="Helical" evidence="1">
    <location>
        <begin position="11"/>
        <end position="31"/>
    </location>
</feature>
<gene>
    <name evidence="1" type="primary">atpF</name>
    <name type="ordered locus">Pcryo_2331</name>
</gene>
<comment type="function">
    <text evidence="1">F(1)F(0) ATP synthase produces ATP from ADP in the presence of a proton or sodium gradient. F-type ATPases consist of two structural domains, F(1) containing the extramembraneous catalytic core and F(0) containing the membrane proton channel, linked together by a central stalk and a peripheral stalk. During catalysis, ATP synthesis in the catalytic domain of F(1) is coupled via a rotary mechanism of the central stalk subunits to proton translocation.</text>
</comment>
<comment type="function">
    <text evidence="1">Component of the F(0) channel, it forms part of the peripheral stalk, linking F(1) to F(0).</text>
</comment>
<comment type="subunit">
    <text evidence="1">F-type ATPases have 2 components, F(1) - the catalytic core - and F(0) - the membrane proton channel. F(1) has five subunits: alpha(3), beta(3), gamma(1), delta(1), epsilon(1). F(0) has three main subunits: a(1), b(2) and c(10-14). The alpha and beta chains form an alternating ring which encloses part of the gamma chain. F(1) is attached to F(0) by a central stalk formed by the gamma and epsilon chains, while a peripheral stalk is formed by the delta and b chains.</text>
</comment>
<comment type="subcellular location">
    <subcellularLocation>
        <location evidence="1">Cell inner membrane</location>
        <topology evidence="1">Single-pass membrane protein</topology>
    </subcellularLocation>
</comment>
<comment type="similarity">
    <text evidence="1">Belongs to the ATPase B chain family.</text>
</comment>
<protein>
    <recommendedName>
        <fullName evidence="1">ATP synthase subunit b</fullName>
    </recommendedName>
    <alternativeName>
        <fullName evidence="1">ATP synthase F(0) sector subunit b</fullName>
    </alternativeName>
    <alternativeName>
        <fullName evidence="1">ATPase subunit I</fullName>
    </alternativeName>
    <alternativeName>
        <fullName evidence="1">F-type ATPase subunit b</fullName>
        <shortName evidence="1">F-ATPase subunit b</shortName>
    </alternativeName>
</protein>
<sequence length="156" mass="17066">MNINSTLIGQAIAFAIFVMFCMKFVWPPLIGAINDRQRKIAEGLNAAEKAKADLATAERDVQQELDLAKTKAAALIEQANKSANQLVEDAKSQAQVEGERIRQQAQASIDQEINQARESLRAQVAELAVLGAEKILQDKVDVQKHASMLDQLAAKL</sequence>
<dbReference type="EMBL" id="CP000323">
    <property type="protein sequence ID" value="ABE76108.1"/>
    <property type="molecule type" value="Genomic_DNA"/>
</dbReference>
<dbReference type="RefSeq" id="WP_011514637.1">
    <property type="nucleotide sequence ID" value="NC_007969.1"/>
</dbReference>
<dbReference type="SMR" id="Q1Q895"/>
<dbReference type="STRING" id="335284.Pcryo_2331"/>
<dbReference type="KEGG" id="pcr:Pcryo_2331"/>
<dbReference type="eggNOG" id="COG0711">
    <property type="taxonomic scope" value="Bacteria"/>
</dbReference>
<dbReference type="HOGENOM" id="CLU_079215_4_5_6"/>
<dbReference type="Proteomes" id="UP000002425">
    <property type="component" value="Chromosome"/>
</dbReference>
<dbReference type="GO" id="GO:0005886">
    <property type="term" value="C:plasma membrane"/>
    <property type="evidence" value="ECO:0007669"/>
    <property type="project" value="UniProtKB-SubCell"/>
</dbReference>
<dbReference type="GO" id="GO:0045259">
    <property type="term" value="C:proton-transporting ATP synthase complex"/>
    <property type="evidence" value="ECO:0007669"/>
    <property type="project" value="UniProtKB-KW"/>
</dbReference>
<dbReference type="GO" id="GO:0046933">
    <property type="term" value="F:proton-transporting ATP synthase activity, rotational mechanism"/>
    <property type="evidence" value="ECO:0007669"/>
    <property type="project" value="UniProtKB-UniRule"/>
</dbReference>
<dbReference type="GO" id="GO:0046961">
    <property type="term" value="F:proton-transporting ATPase activity, rotational mechanism"/>
    <property type="evidence" value="ECO:0007669"/>
    <property type="project" value="TreeGrafter"/>
</dbReference>
<dbReference type="CDD" id="cd06503">
    <property type="entry name" value="ATP-synt_Fo_b"/>
    <property type="match status" value="1"/>
</dbReference>
<dbReference type="FunFam" id="1.20.5.620:FF:000001">
    <property type="entry name" value="ATP synthase subunit b"/>
    <property type="match status" value="1"/>
</dbReference>
<dbReference type="Gene3D" id="1.20.5.620">
    <property type="entry name" value="F1F0 ATP synthase subunit B, membrane domain"/>
    <property type="match status" value="1"/>
</dbReference>
<dbReference type="HAMAP" id="MF_01398">
    <property type="entry name" value="ATP_synth_b_bprime"/>
    <property type="match status" value="1"/>
</dbReference>
<dbReference type="InterPro" id="IPR028987">
    <property type="entry name" value="ATP_synth_B-like_membr_sf"/>
</dbReference>
<dbReference type="InterPro" id="IPR002146">
    <property type="entry name" value="ATP_synth_b/b'su_bac/chlpt"/>
</dbReference>
<dbReference type="InterPro" id="IPR005864">
    <property type="entry name" value="ATP_synth_F0_bsu_bac"/>
</dbReference>
<dbReference type="InterPro" id="IPR050059">
    <property type="entry name" value="ATP_synthase_B_chain"/>
</dbReference>
<dbReference type="NCBIfam" id="TIGR01144">
    <property type="entry name" value="ATP_synt_b"/>
    <property type="match status" value="1"/>
</dbReference>
<dbReference type="NCBIfam" id="NF004411">
    <property type="entry name" value="PRK05759.1-2"/>
    <property type="match status" value="1"/>
</dbReference>
<dbReference type="PANTHER" id="PTHR33445:SF1">
    <property type="entry name" value="ATP SYNTHASE SUBUNIT B"/>
    <property type="match status" value="1"/>
</dbReference>
<dbReference type="PANTHER" id="PTHR33445">
    <property type="entry name" value="ATP SYNTHASE SUBUNIT B', CHLOROPLASTIC"/>
    <property type="match status" value="1"/>
</dbReference>
<dbReference type="Pfam" id="PF00430">
    <property type="entry name" value="ATP-synt_B"/>
    <property type="match status" value="1"/>
</dbReference>
<dbReference type="SUPFAM" id="SSF81573">
    <property type="entry name" value="F1F0 ATP synthase subunit B, membrane domain"/>
    <property type="match status" value="1"/>
</dbReference>
<accession>Q1Q895</accession>
<evidence type="ECO:0000255" key="1">
    <source>
        <dbReference type="HAMAP-Rule" id="MF_01398"/>
    </source>
</evidence>